<organism>
    <name type="scientific">Parasynechococcus marenigrum (strain WH8102)</name>
    <dbReference type="NCBI Taxonomy" id="84588"/>
    <lineage>
        <taxon>Bacteria</taxon>
        <taxon>Bacillati</taxon>
        <taxon>Cyanobacteriota</taxon>
        <taxon>Cyanophyceae</taxon>
        <taxon>Synechococcales</taxon>
        <taxon>Prochlorococcaceae</taxon>
        <taxon>Parasynechococcus</taxon>
        <taxon>Parasynechococcus marenigrum</taxon>
    </lineage>
</organism>
<feature type="chain" id="PRO_0000452071" description="Carboxysome assembly protein CsoS2">
    <location>
        <begin position="1"/>
        <end position="780"/>
    </location>
</feature>
<feature type="repeat" description="N-repeat 1" evidence="1">
    <location>
        <begin position="5"/>
        <end position="24"/>
    </location>
</feature>
<feature type="repeat" description="N-repeat 2" evidence="1">
    <location>
        <begin position="86"/>
        <end position="105"/>
    </location>
</feature>
<feature type="repeat" description="N-repeat 3" evidence="1">
    <location>
        <begin position="175"/>
        <end position="194"/>
    </location>
</feature>
<feature type="repeat" description="N-repeat 4" evidence="1">
    <location>
        <begin position="213"/>
        <end position="235"/>
    </location>
</feature>
<feature type="repeat" description="M-repeat 1" evidence="1">
    <location>
        <begin position="260"/>
        <end position="309"/>
    </location>
</feature>
<feature type="repeat" description="M-repeat 2" evidence="1">
    <location>
        <begin position="320"/>
        <end position="369"/>
    </location>
</feature>
<feature type="repeat" description="M-repeat 3" evidence="1">
    <location>
        <begin position="378"/>
        <end position="417"/>
    </location>
</feature>
<feature type="repeat" description="M-repeat 4" evidence="1">
    <location>
        <begin position="431"/>
        <end position="480"/>
    </location>
</feature>
<feature type="repeat" description="M-repeat 5" evidence="1">
    <location>
        <begin position="490"/>
        <end position="535"/>
    </location>
</feature>
<feature type="repeat" description="M-repeat 6" evidence="1">
    <location>
        <begin position="541"/>
        <end position="599"/>
    </location>
</feature>
<feature type="repeat" description="C-repeat 1" evidence="1">
    <location>
        <begin position="623"/>
        <end position="669"/>
    </location>
</feature>
<feature type="repeat" description="C-repeat 2" evidence="1">
    <location>
        <begin position="693"/>
        <end position="726"/>
    </location>
</feature>
<feature type="region of interest" description="Disordered" evidence="2">
    <location>
        <begin position="1"/>
        <end position="173"/>
    </location>
</feature>
<feature type="region of interest" description="Disordered" evidence="2">
    <location>
        <begin position="189"/>
        <end position="212"/>
    </location>
</feature>
<feature type="region of interest" description="Disordered" evidence="2">
    <location>
        <begin position="226"/>
        <end position="281"/>
    </location>
</feature>
<feature type="region of interest" description="Middle region" evidence="1">
    <location>
        <begin position="260"/>
        <end position="608"/>
    </location>
</feature>
<feature type="region of interest" description="Disordered" evidence="2">
    <location>
        <begin position="330"/>
        <end position="349"/>
    </location>
</feature>
<feature type="region of interest" description="Disordered" evidence="2">
    <location>
        <begin position="382"/>
        <end position="444"/>
    </location>
</feature>
<feature type="region of interest" description="C-terminal domain" evidence="1">
    <location>
        <begin position="609"/>
        <end position="749"/>
    </location>
</feature>
<feature type="region of interest" description="Disordered" evidence="2">
    <location>
        <begin position="631"/>
        <end position="661"/>
    </location>
</feature>
<feature type="region of interest" description="Disordered" evidence="2">
    <location>
        <begin position="686"/>
        <end position="780"/>
    </location>
</feature>
<feature type="region of interest" description="C-terminal peptide" evidence="1">
    <location>
        <begin position="750"/>
        <end position="780"/>
    </location>
</feature>
<feature type="compositionally biased region" description="Basic and acidic residues" evidence="2">
    <location>
        <begin position="1"/>
        <end position="15"/>
    </location>
</feature>
<feature type="compositionally biased region" description="Low complexity" evidence="2">
    <location>
        <begin position="48"/>
        <end position="78"/>
    </location>
</feature>
<feature type="compositionally biased region" description="Basic and acidic residues" evidence="2">
    <location>
        <begin position="86"/>
        <end position="116"/>
    </location>
</feature>
<feature type="compositionally biased region" description="Low complexity" evidence="2">
    <location>
        <begin position="117"/>
        <end position="130"/>
    </location>
</feature>
<feature type="compositionally biased region" description="Low complexity" evidence="2">
    <location>
        <begin position="264"/>
        <end position="276"/>
    </location>
</feature>
<feature type="compositionally biased region" description="Low complexity" evidence="2">
    <location>
        <begin position="387"/>
        <end position="403"/>
    </location>
</feature>
<feature type="compositionally biased region" description="Low complexity" evidence="2">
    <location>
        <begin position="432"/>
        <end position="444"/>
    </location>
</feature>
<feature type="compositionally biased region" description="Polar residues" evidence="2">
    <location>
        <begin position="641"/>
        <end position="651"/>
    </location>
</feature>
<feature type="compositionally biased region" description="Basic and acidic residues" evidence="2">
    <location>
        <begin position="709"/>
        <end position="720"/>
    </location>
</feature>
<feature type="compositionally biased region" description="Polar residues" evidence="2">
    <location>
        <begin position="759"/>
        <end position="768"/>
    </location>
</feature>
<accession>Q7U5I9</accession>
<evidence type="ECO:0000250" key="1">
    <source>
        <dbReference type="UniProtKB" id="O85041"/>
    </source>
</evidence>
<evidence type="ECO:0000256" key="2">
    <source>
        <dbReference type="SAM" id="MobiDB-lite"/>
    </source>
</evidence>
<evidence type="ECO:0000269" key="3">
    <source>
    </source>
</evidence>
<evidence type="ECO:0000303" key="4">
    <source>
    </source>
</evidence>
<evidence type="ECO:0000305" key="5"/>
<evidence type="ECO:0000305" key="6">
    <source>
    </source>
</evidence>
<reference key="1">
    <citation type="journal article" date="2003" name="Nature">
        <title>The genome of a motile marine Synechococcus.</title>
        <authorList>
            <person name="Palenik B."/>
            <person name="Brahamsha B."/>
            <person name="Larimer F.W."/>
            <person name="Land M.L."/>
            <person name="Hauser L."/>
            <person name="Chain P."/>
            <person name="Lamerdin J.E."/>
            <person name="Regala W."/>
            <person name="Allen E.E."/>
            <person name="McCarren J."/>
            <person name="Paulsen I.T."/>
            <person name="Dufresne A."/>
            <person name="Partensky F."/>
            <person name="Webb E.A."/>
            <person name="Waterbury J."/>
        </authorList>
    </citation>
    <scope>NUCLEOTIDE SEQUENCE [LARGE SCALE GENOMIC DNA]</scope>
    <source>
        <strain>WH8102</strain>
    </source>
</reference>
<reference key="2">
    <citation type="journal article" date="2016" name="J. Mol. Biol.">
        <title>Programmed Ribosomal Frameshifting Mediates Expression of the alpha-Carboxysome.</title>
        <authorList>
            <person name="Chaijarasphong T."/>
            <person name="Nichols R.J."/>
            <person name="Kortright K.E."/>
            <person name="Nixon C.F."/>
            <person name="Teng P.K."/>
            <person name="Oltrogge L.M."/>
            <person name="Savage D.F."/>
        </authorList>
    </citation>
    <scope>PROBABLY NO RIBOSOMAL FRAMESHIFT</scope>
</reference>
<reference key="3">
    <citation type="journal article" date="2019" name="Front. Microbiol.">
        <title>Proteomic Response to Rising Temperature in the Marine Cyanobacterium Synechococcus Grown in Different Nitrogen Sources.</title>
        <authorList>
            <person name="Li Y.Y."/>
            <person name="Chen X.H."/>
            <person name="Xue C."/>
            <person name="Zhang H."/>
            <person name="Sun G."/>
            <person name="Xie Z.X."/>
            <person name="Lin L."/>
            <person name="Wang D.Z."/>
        </authorList>
    </citation>
    <scope>IDENTIFICATION BY MASS SPECTROMETRY</scope>
    <scope>INDUCTION</scope>
    <source>
        <strain>WH8102</strain>
    </source>
</reference>
<gene>
    <name evidence="4" type="primary">csoS2</name>
    <name type="ordered locus">SYNW1716</name>
</gene>
<keyword id="KW-0677">Repeat</keyword>
<name>CSOS2_PARMW</name>
<dbReference type="EMBL" id="BX569693">
    <property type="protein sequence ID" value="CAE08231.1"/>
    <property type="molecule type" value="Genomic_DNA"/>
</dbReference>
<dbReference type="RefSeq" id="WP_011128578.1">
    <property type="nucleotide sequence ID" value="NC_005070.1"/>
</dbReference>
<dbReference type="SMR" id="Q7U5I9"/>
<dbReference type="STRING" id="84588.SYNW1716"/>
<dbReference type="KEGG" id="syw:SYNW1716"/>
<dbReference type="eggNOG" id="ENOG502Z8T4">
    <property type="taxonomic scope" value="Bacteria"/>
</dbReference>
<dbReference type="HOGENOM" id="CLU_016451_1_0_3"/>
<dbReference type="Proteomes" id="UP000001422">
    <property type="component" value="Chromosome"/>
</dbReference>
<dbReference type="GO" id="GO:0043886">
    <property type="term" value="F:structural constituent of carboxysome shell"/>
    <property type="evidence" value="ECO:0007669"/>
    <property type="project" value="InterPro"/>
</dbReference>
<dbReference type="InterPro" id="IPR020990">
    <property type="entry name" value="CSOS2/2B"/>
</dbReference>
<dbReference type="Pfam" id="PF12288">
    <property type="entry name" value="CsoS2_M"/>
    <property type="match status" value="2"/>
</dbReference>
<sequence length="780" mass="81029">MARLSSRELALERRKALTTSGKKSSVAAGDGANRVRTASDVRPTRTDAAAAVEPTAPAVSAPVKPTVSFTPASPSSSSHVKPQRHPSRDLVLARRDALSRRGKTADTSRDRNRADVARQTQAAAPVAASAEEQKTCGCGGKRAAGKVQLSAPTTSLKPRSDRRSAAPKRRAIENPSRALVLARREAMAKHGKTAGKQPTSAAAVARQANPDLTSRELAQQVRELRTKAGARNKQSAGATRPTGPNRHGAKQAAAADAHWKVGESTTSTGQTVTGTQANRSVKTTGNEASTCRSITGTEYLGAEVFQTFCQQAPEPTTPAKVRVTATSHGNRVTGNEVGRSEKVTGDEPGTCKSVTGTEYISANQSAAYCGSSQVSQRKVGHSLTQQGRPVSGVMVGRSSSVTGDEAGAGRSLTGDQYLGSDPLPDGRPAAKVGQSGTLSGTGVTGTLVGRSSQVTGNEFGSCHRVTGDQYISAEQVNAFCGSKPEPEAAKVGFSITNRNQVVSGTRTGRSERVTGDEPGTCKAVTGTPYAGLENAGQHCGTSAVQAIRERTPVRLGTPSAAMTGIQPGVGGVMTGDEKGACEAVTGTPYVGADQLATACGNEAPAGTDSHGQAPEGAAWTRFSVMSPARAAQQQRDDQGAVTGTSYEQGNRITGPFDLAGGKVTGTEQFRFDNREFQRRQFQPTVAVVSEPAEQPASRVTGEGSSTKITGDDWDRGEHVTGTEGVSARRRNPTRPGPMSATVPHERKRNEENEWPVSRVTGSSGNTEKGSLITVSGGARG</sequence>
<protein>
    <recommendedName>
        <fullName evidence="5">Carboxysome assembly protein CsoS2</fullName>
    </recommendedName>
    <alternativeName>
        <fullName>Carboxysome shell protein CsoS2</fullName>
    </alternativeName>
</protein>
<proteinExistence type="evidence at protein level"/>
<comment type="function">
    <text evidence="1">Required for alpha-carboxysome (Cb) assembly, mediates interaction between RuBisCO and the carboxysome shell. The protein is probably intrinsically disordered. The C-terminal repeats act as the encapsulation signal to target proteins to the Cb; they are necessary and sufficient to target both CsoS2 and foreign proteins to the Cb. The N-terminal repeats of this protein bind simultaneously to both subunits of RuBisCO. Probably also interacts with the major shell proteins (CsoS1); that interaction would increase the local concentration of CsoS2 so that it can condense RuBisCO and full carboxysomes can be formed.</text>
</comment>
<comment type="subunit">
    <text evidence="1">Interacts via its N-terminal repeats with RuBisCO. Interacts with the major shell protein CsoS1.</text>
</comment>
<comment type="induction">
    <text evidence="3">Down-regulated with rising temperature (from 25 to 28 degrees Celsius) in both nitrate- and urea-grown cells (at protein level).</text>
</comment>
<comment type="domain">
    <text evidence="1">Has 3 domains; the N-terminal domain has 4 short repeats and binds RuBisCO. The central region has 6 longer repeats. The C-terminal domain has 2 repeats and a highly conserved C-terminal peptide. The C-repeats serve as the encapsulation signal for the alpha-carboxysome, and are able to target foreign proteins to this organelle.</text>
</comment>
<comment type="PTM">
    <text evidence="6">Unlike H.neapolitanus and predictions for P.marinus strain MIT 9313, this protein is not thought to have ribosomal frameshifting.</text>
</comment>
<comment type="similarity">
    <text evidence="5">Belongs to the CsoS2 family.</text>
</comment>